<organism>
    <name type="scientific">Cricetulus griseus</name>
    <name type="common">Chinese hamster</name>
    <name type="synonym">Cricetulus barabensis griseus</name>
    <dbReference type="NCBI Taxonomy" id="10029"/>
    <lineage>
        <taxon>Eukaryota</taxon>
        <taxon>Metazoa</taxon>
        <taxon>Chordata</taxon>
        <taxon>Craniata</taxon>
        <taxon>Vertebrata</taxon>
        <taxon>Euteleostomi</taxon>
        <taxon>Mammalia</taxon>
        <taxon>Eutheria</taxon>
        <taxon>Euarchontoglires</taxon>
        <taxon>Glires</taxon>
        <taxon>Rodentia</taxon>
        <taxon>Myomorpha</taxon>
        <taxon>Muroidea</taxon>
        <taxon>Cricetidae</taxon>
        <taxon>Cricetinae</taxon>
        <taxon>Cricetulus</taxon>
    </lineage>
</organism>
<reference key="1">
    <citation type="submission" date="1995-04" db="EMBL/GenBank/DDBJ databases">
        <title>Molecular cloning and expression of a Chinese hamster lung fibroblast cDNA encoding a 5-HT1B receptor.</title>
        <authorList>
            <person name="Wurch T."/>
            <person name="Palmier C."/>
            <person name="Colpaert F.C."/>
            <person name="Pauwels P.J."/>
        </authorList>
    </citation>
    <scope>NUCLEOTIDE SEQUENCE [MRNA]</scope>
    <source>
        <tissue>Lung fibroblast</tissue>
    </source>
</reference>
<keyword id="KW-0085">Behavior</keyword>
<keyword id="KW-1003">Cell membrane</keyword>
<keyword id="KW-1015">Disulfide bond</keyword>
<keyword id="KW-0297">G-protein coupled receptor</keyword>
<keyword id="KW-0325">Glycoprotein</keyword>
<keyword id="KW-0449">Lipoprotein</keyword>
<keyword id="KW-0472">Membrane</keyword>
<keyword id="KW-0564">Palmitate</keyword>
<keyword id="KW-0597">Phosphoprotein</keyword>
<keyword id="KW-0675">Receptor</keyword>
<keyword id="KW-0807">Transducer</keyword>
<keyword id="KW-0812">Transmembrane</keyword>
<keyword id="KW-1133">Transmembrane helix</keyword>
<accession>P46636</accession>
<protein>
    <recommendedName>
        <fullName>5-hydroxytryptamine receptor 1B</fullName>
        <shortName>5-HT-1B</shortName>
        <shortName>5-HT1B</shortName>
    </recommendedName>
    <alternativeName>
        <fullName>Serotonin receptor 1B</fullName>
    </alternativeName>
</protein>
<dbReference type="EMBL" id="X86458">
    <property type="protein sequence ID" value="CAA60175.1"/>
    <property type="molecule type" value="mRNA"/>
</dbReference>
<dbReference type="PIR" id="S54153">
    <property type="entry name" value="S54153"/>
</dbReference>
<dbReference type="RefSeq" id="NP_001233683.1">
    <property type="nucleotide sequence ID" value="NM_001246754.1"/>
</dbReference>
<dbReference type="SMR" id="P46636"/>
<dbReference type="BindingDB" id="P46636"/>
<dbReference type="ChEMBL" id="CHEMBL3707466"/>
<dbReference type="GlyCosmos" id="P46636">
    <property type="glycosylation" value="2 sites, No reported glycans"/>
</dbReference>
<dbReference type="PaxDb" id="10029-NP_001233683.1"/>
<dbReference type="GeneID" id="100689321"/>
<dbReference type="KEGG" id="cge:100689321"/>
<dbReference type="CTD" id="3351"/>
<dbReference type="eggNOG" id="KOG3656">
    <property type="taxonomic scope" value="Eukaryota"/>
</dbReference>
<dbReference type="OrthoDB" id="5956310at2759"/>
<dbReference type="Proteomes" id="UP000694386">
    <property type="component" value="Unplaced"/>
</dbReference>
<dbReference type="Proteomes" id="UP001108280">
    <property type="component" value="Chromosome 4"/>
</dbReference>
<dbReference type="GO" id="GO:0005886">
    <property type="term" value="C:plasma membrane"/>
    <property type="evidence" value="ECO:0000250"/>
    <property type="project" value="UniProtKB"/>
</dbReference>
<dbReference type="GO" id="GO:0098793">
    <property type="term" value="C:presynapse"/>
    <property type="evidence" value="ECO:0007669"/>
    <property type="project" value="GOC"/>
</dbReference>
<dbReference type="GO" id="GO:0099154">
    <property type="term" value="C:serotonergic synapse"/>
    <property type="evidence" value="ECO:0000314"/>
    <property type="project" value="SynGO"/>
</dbReference>
<dbReference type="GO" id="GO:0004993">
    <property type="term" value="F:G protein-coupled serotonin receptor activity"/>
    <property type="evidence" value="ECO:0000250"/>
    <property type="project" value="UniProtKB"/>
</dbReference>
<dbReference type="GO" id="GO:0071880">
    <property type="term" value="P:adenylate cyclase-activating adrenergic receptor signaling pathway"/>
    <property type="evidence" value="ECO:0007669"/>
    <property type="project" value="TreeGrafter"/>
</dbReference>
<dbReference type="GO" id="GO:0007198">
    <property type="term" value="P:adenylate cyclase-inhibiting serotonin receptor signaling pathway"/>
    <property type="evidence" value="ECO:0000250"/>
    <property type="project" value="UniProtKB"/>
</dbReference>
<dbReference type="GO" id="GO:0046849">
    <property type="term" value="P:bone remodeling"/>
    <property type="evidence" value="ECO:0007669"/>
    <property type="project" value="InterPro"/>
</dbReference>
<dbReference type="GO" id="GO:0071312">
    <property type="term" value="P:cellular response to alkaloid"/>
    <property type="evidence" value="ECO:0000250"/>
    <property type="project" value="UniProtKB"/>
</dbReference>
<dbReference type="GO" id="GO:0071466">
    <property type="term" value="P:cellular response to xenobiotic stimulus"/>
    <property type="evidence" value="ECO:0000250"/>
    <property type="project" value="UniProtKB"/>
</dbReference>
<dbReference type="GO" id="GO:0007268">
    <property type="term" value="P:chemical synaptic transmission"/>
    <property type="evidence" value="ECO:0007669"/>
    <property type="project" value="InterPro"/>
</dbReference>
<dbReference type="GO" id="GO:0014063">
    <property type="term" value="P:negative regulation of serotonin secretion"/>
    <property type="evidence" value="ECO:0000250"/>
    <property type="project" value="UniProtKB"/>
</dbReference>
<dbReference type="GO" id="GO:0043410">
    <property type="term" value="P:positive regulation of MAPK cascade"/>
    <property type="evidence" value="ECO:0007669"/>
    <property type="project" value="TreeGrafter"/>
</dbReference>
<dbReference type="GO" id="GO:0099171">
    <property type="term" value="P:presynaptic modulation of chemical synaptic transmission"/>
    <property type="evidence" value="ECO:0000314"/>
    <property type="project" value="SynGO"/>
</dbReference>
<dbReference type="GO" id="GO:0050795">
    <property type="term" value="P:regulation of behavior"/>
    <property type="evidence" value="ECO:0007669"/>
    <property type="project" value="InterPro"/>
</dbReference>
<dbReference type="GO" id="GO:0042310">
    <property type="term" value="P:vasoconstriction"/>
    <property type="evidence" value="ECO:0007669"/>
    <property type="project" value="InterPro"/>
</dbReference>
<dbReference type="CDD" id="cd15333">
    <property type="entry name" value="7tmA_5-HT1B_1D"/>
    <property type="match status" value="1"/>
</dbReference>
<dbReference type="Gene3D" id="1.20.1070.10">
    <property type="entry name" value="Rhodopsin 7-helix transmembrane proteins"/>
    <property type="match status" value="1"/>
</dbReference>
<dbReference type="InterPro" id="IPR002147">
    <property type="entry name" value="5HT1B_rcpt"/>
</dbReference>
<dbReference type="InterPro" id="IPR002231">
    <property type="entry name" value="5HT_rcpt"/>
</dbReference>
<dbReference type="InterPro" id="IPR000276">
    <property type="entry name" value="GPCR_Rhodpsn"/>
</dbReference>
<dbReference type="InterPro" id="IPR017452">
    <property type="entry name" value="GPCR_Rhodpsn_7TM"/>
</dbReference>
<dbReference type="PANTHER" id="PTHR24248:SF201">
    <property type="entry name" value="5-HYDROXYTRYPTAMINE RECEPTOR 1B"/>
    <property type="match status" value="1"/>
</dbReference>
<dbReference type="PANTHER" id="PTHR24248">
    <property type="entry name" value="ADRENERGIC RECEPTOR-RELATED G-PROTEIN COUPLED RECEPTOR"/>
    <property type="match status" value="1"/>
</dbReference>
<dbReference type="Pfam" id="PF00001">
    <property type="entry name" value="7tm_1"/>
    <property type="match status" value="1"/>
</dbReference>
<dbReference type="PRINTS" id="PR00513">
    <property type="entry name" value="5HT1BRECEPTR"/>
</dbReference>
<dbReference type="PRINTS" id="PR01101">
    <property type="entry name" value="5HTRECEPTOR"/>
</dbReference>
<dbReference type="PRINTS" id="PR00237">
    <property type="entry name" value="GPCRRHODOPSN"/>
</dbReference>
<dbReference type="SMART" id="SM01381">
    <property type="entry name" value="7TM_GPCR_Srsx"/>
    <property type="match status" value="1"/>
</dbReference>
<dbReference type="SUPFAM" id="SSF81321">
    <property type="entry name" value="Family A G protein-coupled receptor-like"/>
    <property type="match status" value="1"/>
</dbReference>
<dbReference type="PROSITE" id="PS00237">
    <property type="entry name" value="G_PROTEIN_RECEP_F1_1"/>
    <property type="match status" value="1"/>
</dbReference>
<dbReference type="PROSITE" id="PS50262">
    <property type="entry name" value="G_PROTEIN_RECEP_F1_2"/>
    <property type="match status" value="1"/>
</dbReference>
<evidence type="ECO:0000250" key="1">
    <source>
        <dbReference type="UniProtKB" id="P28222"/>
    </source>
</evidence>
<evidence type="ECO:0000250" key="2">
    <source>
        <dbReference type="UniProtKB" id="P41595"/>
    </source>
</evidence>
<evidence type="ECO:0000255" key="3"/>
<evidence type="ECO:0000255" key="4">
    <source>
        <dbReference type="PROSITE-ProRule" id="PRU00521"/>
    </source>
</evidence>
<evidence type="ECO:0000256" key="5">
    <source>
        <dbReference type="SAM" id="MobiDB-lite"/>
    </source>
</evidence>
<evidence type="ECO:0000305" key="6"/>
<sequence length="386" mass="42896">MEEQGIQCAPPPPAASQTGVPLVNLSHNCSAESHIYQDSIALPWKVLLVALLALITLATTLSNAFVIATVYRTRKLHTPANYLIASLAVTDLLVSILVMPVSTMYTVTGRWTLGQVVCDFWLSSDITCCTASIMHLCVIALDRYWAITDAVEYAAKRTPKRAAIMIALVWVFSISISLPPFFWRQAKAEEEVLTCLVNTDHVLYTVYSTGGAFYLPTLLLIALYGRIYVEARSRILKQTPNKTGKRLTRAQLITDSPGSTTSVTSINSRAPDLPSESGSPVYVNQVKVRVSDALLEKKKLMAARERKATKTLGIILGAFIVCWLPFFIISLVMPICKDACWFHMATLDFFNWLGYLNSLINPIIYTMSNEDFKQAFHKLIRFKCAG</sequence>
<comment type="function">
    <text evidence="1">G-protein coupled receptor for 5-hydroxytryptamine (serotonin). Also functions as a receptor for ergot alkaloid derivatives, various anxiolytic and antidepressant drugs and other psychoactive substances, such as lysergic acid diethylamide (LSD). Ligand binding causes a conformation change that triggers signaling via guanine nucleotide-binding proteins (G proteins) and modulates the activity of downstream effectors, such as adenylate cyclase. HTR1B is coupled to G(i)/G(o) G alpha proteins and mediates inhibitory neurotransmission by inhibiting adenylate cyclase activity. Arrestin family members inhibit signaling via G proteins and mediate activation of alternative signaling pathways. Regulates the release of 5-hydroxytryptamine, dopamine and acetylcholine in the brain, and thereby affects neural activity, nociceptive processing, pain perception, mood and behavior. Besides, plays a role in vasoconstriction of cerebral arteries.</text>
</comment>
<comment type="subunit">
    <text evidence="1">Homodimer. Heterodimer with HTR1D.</text>
</comment>
<comment type="subcellular location">
    <subcellularLocation>
        <location evidence="1">Cell membrane</location>
        <topology evidence="1">Multi-pass membrane protein</topology>
    </subcellularLocation>
</comment>
<comment type="domain">
    <text evidence="1">Ligands are bound in a hydrophobic pocket formed by the transmembrane helices.</text>
</comment>
<comment type="domain">
    <text evidence="1">A residue in the 7th transmembrane region ('Thr-355' in human, 'Asn-351' in mouse and rat) is important for species-specific sensitivity to various agonists.</text>
</comment>
<comment type="PTM">
    <text evidence="1">Phosphorylated. Desensitization of the receptor may be mediated by its phosphorylation.</text>
</comment>
<comment type="PTM">
    <text evidence="1">Palmitoylated.</text>
</comment>
<comment type="similarity">
    <text evidence="4">Belongs to the G-protein coupled receptor 1 family.</text>
</comment>
<name>5HT1B_CRIGR</name>
<proteinExistence type="evidence at transcript level"/>
<feature type="chain" id="PRO_0000068912" description="5-hydroxytryptamine receptor 1B">
    <location>
        <begin position="1"/>
        <end position="386"/>
    </location>
</feature>
<feature type="topological domain" description="Extracellular" evidence="1">
    <location>
        <begin position="1"/>
        <end position="42"/>
    </location>
</feature>
<feature type="transmembrane region" description="Helical; Name=1" evidence="1">
    <location>
        <begin position="43"/>
        <end position="68"/>
    </location>
</feature>
<feature type="topological domain" description="Cytoplasmic" evidence="1">
    <location>
        <begin position="69"/>
        <end position="82"/>
    </location>
</feature>
<feature type="transmembrane region" description="Helical; Name=2" evidence="1">
    <location>
        <begin position="83"/>
        <end position="107"/>
    </location>
</feature>
<feature type="topological domain" description="Extracellular" evidence="1">
    <location>
        <begin position="108"/>
        <end position="115"/>
    </location>
</feature>
<feature type="transmembrane region" description="Helical; Name=3" evidence="1">
    <location>
        <begin position="116"/>
        <end position="141"/>
    </location>
</feature>
<feature type="topological domain" description="Cytoplasmic" evidence="1">
    <location>
        <begin position="142"/>
        <end position="161"/>
    </location>
</feature>
<feature type="transmembrane region" description="Helical; Name=4" evidence="1">
    <location>
        <begin position="162"/>
        <end position="180"/>
    </location>
</feature>
<feature type="topological domain" description="Extracellular" evidence="1 6">
    <location>
        <begin position="181"/>
        <end position="201"/>
    </location>
</feature>
<feature type="transmembrane region" description="Helical; Name=5" evidence="1">
    <location>
        <begin position="202"/>
        <end position="225"/>
    </location>
</feature>
<feature type="topological domain" description="Cytoplasmic" evidence="1">
    <location>
        <begin position="226"/>
        <end position="311"/>
    </location>
</feature>
<feature type="transmembrane region" description="Helical; Name=6" evidence="1">
    <location>
        <begin position="312"/>
        <end position="333"/>
    </location>
</feature>
<feature type="topological domain" description="Extracellular" evidence="1">
    <location>
        <begin position="334"/>
        <end position="343"/>
    </location>
</feature>
<feature type="transmembrane region" description="Helical; Name=7" evidence="1">
    <location>
        <begin position="344"/>
        <end position="366"/>
    </location>
</feature>
<feature type="topological domain" description="Cytoplasmic" evidence="1">
    <location>
        <begin position="367"/>
        <end position="386"/>
    </location>
</feature>
<feature type="region of interest" description="Disordered" evidence="5">
    <location>
        <begin position="255"/>
        <end position="278"/>
    </location>
</feature>
<feature type="short sequence motif" description="DRY motif; important for ligand-induced conformation changes and signaling" evidence="2">
    <location>
        <begin position="142"/>
        <end position="144"/>
    </location>
</feature>
<feature type="short sequence motif" description="NPxxY motif; important for ligand-induced conformation changes and signaling" evidence="2">
    <location>
        <begin position="361"/>
        <end position="365"/>
    </location>
</feature>
<feature type="compositionally biased region" description="Polar residues" evidence="5">
    <location>
        <begin position="255"/>
        <end position="268"/>
    </location>
</feature>
<feature type="binding site" evidence="1">
    <location>
        <position position="125"/>
    </location>
    <ligand>
        <name>ergotamine</name>
        <dbReference type="ChEBI" id="CHEBI:190463"/>
        <note>agonist</note>
    </ligand>
</feature>
<feature type="binding site" evidence="1">
    <location>
        <position position="130"/>
    </location>
    <ligand>
        <name>ergotamine</name>
        <dbReference type="ChEBI" id="CHEBI:190463"/>
        <note>agonist</note>
    </ligand>
</feature>
<feature type="binding site" evidence="1">
    <location>
        <position position="197"/>
    </location>
    <ligand>
        <name>ergotamine</name>
        <dbReference type="ChEBI" id="CHEBI:190463"/>
        <note>agonist</note>
    </ligand>
</feature>
<feature type="site" description="Important for species-specific agonist sensitivity" evidence="1">
    <location>
        <position position="351"/>
    </location>
</feature>
<feature type="lipid moiety-binding region" description="S-palmitoyl cysteine" evidence="3">
    <location>
        <position position="384"/>
    </location>
</feature>
<feature type="glycosylation site" description="N-linked (GlcNAc...) asparagine" evidence="3">
    <location>
        <position position="24"/>
    </location>
</feature>
<feature type="glycosylation site" description="N-linked (GlcNAc...) asparagine" evidence="3">
    <location>
        <position position="28"/>
    </location>
</feature>
<feature type="disulfide bond" evidence="4">
    <location>
        <begin position="118"/>
        <end position="195"/>
    </location>
</feature>
<gene>
    <name type="primary">HTR1B</name>
</gene>